<keyword id="KW-0067">ATP-binding</keyword>
<keyword id="KW-0347">Helicase</keyword>
<keyword id="KW-0378">Hydrolase</keyword>
<keyword id="KW-0396">Initiation factor</keyword>
<keyword id="KW-0547">Nucleotide-binding</keyword>
<keyword id="KW-0648">Protein biosynthesis</keyword>
<keyword id="KW-1185">Reference proteome</keyword>
<keyword id="KW-0694">RNA-binding</keyword>
<reference key="1">
    <citation type="journal article" date="1995" name="Biochim. Biophys. Acta">
        <title>Highly conserved genes coding for eukaryotic translation initiation factor eIF-4A of tobacco have specific alterations in functional motifs.</title>
        <authorList>
            <person name="Brander K.A."/>
            <person name="Mandel T."/>
            <person name="Owttrim G.W."/>
            <person name="Kuhlemeier C."/>
        </authorList>
    </citation>
    <scope>NUCLEOTIDE SEQUENCE [GENOMIC DNA / MRNA]</scope>
    <source>
        <strain>cv. SR1</strain>
        <tissue>Leaf</tissue>
    </source>
</reference>
<accession>P41382</accession>
<feature type="chain" id="PRO_0000054957" description="Eukaryotic initiation factor 4A-10">
    <location>
        <begin position="1"/>
        <end position="413"/>
    </location>
</feature>
<feature type="domain" description="Helicase ATP-binding" evidence="2">
    <location>
        <begin position="71"/>
        <end position="241"/>
    </location>
</feature>
<feature type="domain" description="Helicase C-terminal" evidence="3">
    <location>
        <begin position="252"/>
        <end position="413"/>
    </location>
</feature>
<feature type="short sequence motif" description="Q motif">
    <location>
        <begin position="40"/>
        <end position="68"/>
    </location>
</feature>
<feature type="short sequence motif" description="DEAD box">
    <location>
        <begin position="189"/>
        <end position="192"/>
    </location>
</feature>
<feature type="binding site" evidence="2">
    <location>
        <begin position="84"/>
        <end position="91"/>
    </location>
    <ligand>
        <name>ATP</name>
        <dbReference type="ChEBI" id="CHEBI:30616"/>
    </ligand>
</feature>
<evidence type="ECO:0000250" key="1"/>
<evidence type="ECO:0000255" key="2">
    <source>
        <dbReference type="PROSITE-ProRule" id="PRU00541"/>
    </source>
</evidence>
<evidence type="ECO:0000255" key="3">
    <source>
        <dbReference type="PROSITE-ProRule" id="PRU00542"/>
    </source>
</evidence>
<evidence type="ECO:0000305" key="4"/>
<protein>
    <recommendedName>
        <fullName>Eukaryotic initiation factor 4A-10</fullName>
        <shortName>eIF-4A-10</shortName>
        <ecNumber>3.6.4.13</ecNumber>
    </recommendedName>
    <alternativeName>
        <fullName>ATP-dependent RNA helicase eIF4A-10</fullName>
    </alternativeName>
</protein>
<organism>
    <name type="scientific">Nicotiana tabacum</name>
    <name type="common">Common tobacco</name>
    <dbReference type="NCBI Taxonomy" id="4097"/>
    <lineage>
        <taxon>Eukaryota</taxon>
        <taxon>Viridiplantae</taxon>
        <taxon>Streptophyta</taxon>
        <taxon>Embryophyta</taxon>
        <taxon>Tracheophyta</taxon>
        <taxon>Spermatophyta</taxon>
        <taxon>Magnoliopsida</taxon>
        <taxon>eudicotyledons</taxon>
        <taxon>Gunneridae</taxon>
        <taxon>Pentapetalae</taxon>
        <taxon>asterids</taxon>
        <taxon>lamiids</taxon>
        <taxon>Solanales</taxon>
        <taxon>Solanaceae</taxon>
        <taxon>Nicotianoideae</taxon>
        <taxon>Nicotianeae</taxon>
        <taxon>Nicotiana</taxon>
    </lineage>
</organism>
<name>IF410_TOBAC</name>
<dbReference type="EC" id="3.6.4.13"/>
<dbReference type="EMBL" id="X79009">
    <property type="protein sequence ID" value="CAA55642.1"/>
    <property type="molecule type" value="mRNA"/>
</dbReference>
<dbReference type="EMBL" id="X79008">
    <property type="protein sequence ID" value="CAA55641.1"/>
    <property type="molecule type" value="Genomic_DNA"/>
</dbReference>
<dbReference type="PIR" id="S55898">
    <property type="entry name" value="S55898"/>
</dbReference>
<dbReference type="RefSeq" id="NP_001312303.1">
    <property type="nucleotide sequence ID" value="NM_001325374.1"/>
</dbReference>
<dbReference type="SMR" id="P41382"/>
<dbReference type="STRING" id="4097.P41382"/>
<dbReference type="PaxDb" id="4097-P41382"/>
<dbReference type="ProMEX" id="P41382"/>
<dbReference type="GeneID" id="107783884"/>
<dbReference type="KEGG" id="nta:107783884"/>
<dbReference type="OrthoDB" id="1213547at2759"/>
<dbReference type="Proteomes" id="UP000084051">
    <property type="component" value="Unplaced"/>
</dbReference>
<dbReference type="GO" id="GO:0010494">
    <property type="term" value="C:cytoplasmic stress granule"/>
    <property type="evidence" value="ECO:0000318"/>
    <property type="project" value="GO_Central"/>
</dbReference>
<dbReference type="GO" id="GO:0005524">
    <property type="term" value="F:ATP binding"/>
    <property type="evidence" value="ECO:0007669"/>
    <property type="project" value="UniProtKB-KW"/>
</dbReference>
<dbReference type="GO" id="GO:0016887">
    <property type="term" value="F:ATP hydrolysis activity"/>
    <property type="evidence" value="ECO:0007669"/>
    <property type="project" value="RHEA"/>
</dbReference>
<dbReference type="GO" id="GO:0003723">
    <property type="term" value="F:RNA binding"/>
    <property type="evidence" value="ECO:0007669"/>
    <property type="project" value="UniProtKB-KW"/>
</dbReference>
<dbReference type="GO" id="GO:0003724">
    <property type="term" value="F:RNA helicase activity"/>
    <property type="evidence" value="ECO:0007669"/>
    <property type="project" value="UniProtKB-EC"/>
</dbReference>
<dbReference type="GO" id="GO:0003743">
    <property type="term" value="F:translation initiation factor activity"/>
    <property type="evidence" value="ECO:0000318"/>
    <property type="project" value="GO_Central"/>
</dbReference>
<dbReference type="GO" id="GO:0002183">
    <property type="term" value="P:cytoplasmic translational initiation"/>
    <property type="evidence" value="ECO:0000318"/>
    <property type="project" value="GO_Central"/>
</dbReference>
<dbReference type="CDD" id="cd17939">
    <property type="entry name" value="DEADc_EIF4A"/>
    <property type="match status" value="1"/>
</dbReference>
<dbReference type="CDD" id="cd18787">
    <property type="entry name" value="SF2_C_DEAD"/>
    <property type="match status" value="1"/>
</dbReference>
<dbReference type="FunFam" id="3.40.50.300:FF:000089">
    <property type="entry name" value="Eukaryotic initiation factor 4A-II"/>
    <property type="match status" value="1"/>
</dbReference>
<dbReference type="FunFam" id="3.40.50.300:FF:000031">
    <property type="entry name" value="Eukaryotic initiation factor 4A-III"/>
    <property type="match status" value="1"/>
</dbReference>
<dbReference type="Gene3D" id="3.40.50.300">
    <property type="entry name" value="P-loop containing nucleotide triphosphate hydrolases"/>
    <property type="match status" value="2"/>
</dbReference>
<dbReference type="InterPro" id="IPR011545">
    <property type="entry name" value="DEAD/DEAH_box_helicase_dom"/>
</dbReference>
<dbReference type="InterPro" id="IPR014001">
    <property type="entry name" value="Helicase_ATP-bd"/>
</dbReference>
<dbReference type="InterPro" id="IPR001650">
    <property type="entry name" value="Helicase_C-like"/>
</dbReference>
<dbReference type="InterPro" id="IPR027417">
    <property type="entry name" value="P-loop_NTPase"/>
</dbReference>
<dbReference type="InterPro" id="IPR000629">
    <property type="entry name" value="RNA-helicase_DEAD-box_CS"/>
</dbReference>
<dbReference type="InterPro" id="IPR014014">
    <property type="entry name" value="RNA_helicase_DEAD_Q_motif"/>
</dbReference>
<dbReference type="PANTHER" id="PTHR47958">
    <property type="entry name" value="ATP-DEPENDENT RNA HELICASE DBP3"/>
    <property type="match status" value="1"/>
</dbReference>
<dbReference type="Pfam" id="PF00270">
    <property type="entry name" value="DEAD"/>
    <property type="match status" value="1"/>
</dbReference>
<dbReference type="Pfam" id="PF00271">
    <property type="entry name" value="Helicase_C"/>
    <property type="match status" value="1"/>
</dbReference>
<dbReference type="SMART" id="SM00487">
    <property type="entry name" value="DEXDc"/>
    <property type="match status" value="1"/>
</dbReference>
<dbReference type="SMART" id="SM00490">
    <property type="entry name" value="HELICc"/>
    <property type="match status" value="1"/>
</dbReference>
<dbReference type="SUPFAM" id="SSF52540">
    <property type="entry name" value="P-loop containing nucleoside triphosphate hydrolases"/>
    <property type="match status" value="1"/>
</dbReference>
<dbReference type="PROSITE" id="PS00039">
    <property type="entry name" value="DEAD_ATP_HELICASE"/>
    <property type="match status" value="1"/>
</dbReference>
<dbReference type="PROSITE" id="PS51192">
    <property type="entry name" value="HELICASE_ATP_BIND_1"/>
    <property type="match status" value="1"/>
</dbReference>
<dbReference type="PROSITE" id="PS51194">
    <property type="entry name" value="HELICASE_CTER"/>
    <property type="match status" value="1"/>
</dbReference>
<dbReference type="PROSITE" id="PS51195">
    <property type="entry name" value="Q_MOTIF"/>
    <property type="match status" value="1"/>
</dbReference>
<proteinExistence type="evidence at transcript level"/>
<sequence length="413" mass="46843">MAGLAPEGSQFDARQYDAKMTELLGTEQEEFFTSYDEVYDSFDAMGLQENLLRGIYAYGFEKPSAIQQRGIVPFCKGLDVIQQAQSGTGKTATFCSGVLQQLDYSLVECQALVLAPTRELAQQIEKVMRALGDYLGVKVHACVGGTSVREDQRILQSGVHVVVGTPGRVFDMLRRQSLRPDHIKMFVLDEADEMLSRGFKDQIYDIFQLLPPKIQVGVFSATMPPEALEITRKFMNKPVRILVKRDDVTLEGIKQFYVNVDKEEWKLETLCDLYETLAITQSVIFVNTRRKVDWLTDKMRSRDHTVSATHGDMDQNTRDIIMREFRSGSSRVLITTDLLARGIDVQQVSLVINYDLPTQPENYLHRIGRSGRFGRKGVAINFVTKDDERMLSDIQKFYNVVIEELPANVADLL</sequence>
<comment type="function">
    <text evidence="1">ATP-dependent RNA helicase which is a subunit of the eIF4F complex involved in cap recognition and is required for mRNA binding to ribosome. In the current model of translation initiation, eIF4A unwinds RNA secondary structures in the 5'-UTR of mRNAs which is necessary to allow efficient binding of the small ribosomal subunit, and subsequent scanning for the initiator codon (By similarity).</text>
</comment>
<comment type="catalytic activity">
    <reaction>
        <text>ATP + H2O = ADP + phosphate + H(+)</text>
        <dbReference type="Rhea" id="RHEA:13065"/>
        <dbReference type="ChEBI" id="CHEBI:15377"/>
        <dbReference type="ChEBI" id="CHEBI:15378"/>
        <dbReference type="ChEBI" id="CHEBI:30616"/>
        <dbReference type="ChEBI" id="CHEBI:43474"/>
        <dbReference type="ChEBI" id="CHEBI:456216"/>
        <dbReference type="EC" id="3.6.4.13"/>
    </reaction>
</comment>
<comment type="subunit">
    <text evidence="1">eIF4F is a multi-subunit complex, the composition of which varies with external and internal environmental conditions. It is composed of at least EIF4A, EIF4E and EIF4G (By similarity).</text>
</comment>
<comment type="similarity">
    <text evidence="4">Belongs to the DEAD box helicase family. eIF4A subfamily.</text>
</comment>